<evidence type="ECO:0000250" key="1"/>
<evidence type="ECO:0000250" key="2">
    <source>
        <dbReference type="UniProtKB" id="P39748"/>
    </source>
</evidence>
<evidence type="ECO:0000250" key="3">
    <source>
        <dbReference type="UniProtKB" id="Q17RS7"/>
    </source>
</evidence>
<evidence type="ECO:0000250" key="4">
    <source>
        <dbReference type="UniProtKB" id="Q58839"/>
    </source>
</evidence>
<evidence type="ECO:0000256" key="5">
    <source>
        <dbReference type="SAM" id="MobiDB-lite"/>
    </source>
</evidence>
<evidence type="ECO:0000269" key="6">
    <source>
    </source>
</evidence>
<evidence type="ECO:0000269" key="7">
    <source>
    </source>
</evidence>
<evidence type="ECO:0000269" key="8">
    <source>
    </source>
</evidence>
<evidence type="ECO:0000269" key="9">
    <source>
    </source>
</evidence>
<evidence type="ECO:0000269" key="10">
    <source>
    </source>
</evidence>
<evidence type="ECO:0000269" key="11">
    <source>
    </source>
</evidence>
<evidence type="ECO:0000269" key="12">
    <source>
    </source>
</evidence>
<evidence type="ECO:0000269" key="13">
    <source>
    </source>
</evidence>
<evidence type="ECO:0000269" key="14">
    <source>
    </source>
</evidence>
<evidence type="ECO:0000269" key="15">
    <source>
    </source>
</evidence>
<evidence type="ECO:0000269" key="16">
    <source>
    </source>
</evidence>
<evidence type="ECO:0000269" key="17">
    <source>
    </source>
</evidence>
<evidence type="ECO:0000269" key="18">
    <source>
    </source>
</evidence>
<evidence type="ECO:0000269" key="19">
    <source>
    </source>
</evidence>
<evidence type="ECO:0000269" key="20">
    <source>
    </source>
</evidence>
<evidence type="ECO:0000269" key="21">
    <source>
    </source>
</evidence>
<evidence type="ECO:0000269" key="22">
    <source>
    </source>
</evidence>
<evidence type="ECO:0000269" key="23">
    <source>
    </source>
</evidence>
<evidence type="ECO:0000269" key="24">
    <source>
    </source>
</evidence>
<evidence type="ECO:0000269" key="25">
    <source>
    </source>
</evidence>
<evidence type="ECO:0000269" key="26">
    <source>
    </source>
</evidence>
<evidence type="ECO:0000269" key="27">
    <source>
    </source>
</evidence>
<evidence type="ECO:0000269" key="28">
    <source>
    </source>
</evidence>
<evidence type="ECO:0000269" key="29">
    <source>
    </source>
</evidence>
<evidence type="ECO:0000269" key="30">
    <source>
    </source>
</evidence>
<evidence type="ECO:0000269" key="31">
    <source>
    </source>
</evidence>
<evidence type="ECO:0000269" key="32">
    <source>
    </source>
</evidence>
<evidence type="ECO:0000269" key="33">
    <source>
    </source>
</evidence>
<evidence type="ECO:0000269" key="34">
    <source ref="5"/>
</evidence>
<evidence type="ECO:0000303" key="35">
    <source>
    </source>
</evidence>
<evidence type="ECO:0000305" key="36"/>
<evidence type="ECO:0007744" key="37">
    <source>
        <dbReference type="PDB" id="3QEB"/>
    </source>
</evidence>
<evidence type="ECO:0007744" key="38">
    <source>
        <dbReference type="PDB" id="5V05"/>
    </source>
</evidence>
<evidence type="ECO:0007744" key="39">
    <source>
        <dbReference type="PDB" id="5V06"/>
    </source>
</evidence>
<evidence type="ECO:0007744" key="40">
    <source>
        <dbReference type="PDB" id="5V07"/>
    </source>
</evidence>
<evidence type="ECO:0007744" key="41">
    <source>
        <dbReference type="PDB" id="5V08"/>
    </source>
</evidence>
<evidence type="ECO:0007744" key="42">
    <source>
        <dbReference type="PDB" id="5V09"/>
    </source>
</evidence>
<evidence type="ECO:0007744" key="43">
    <source>
        <dbReference type="PDB" id="5V0A"/>
    </source>
</evidence>
<evidence type="ECO:0007744" key="44">
    <source>
        <dbReference type="PDB" id="5V0B"/>
    </source>
</evidence>
<evidence type="ECO:0007744" key="45">
    <source>
        <dbReference type="PDB" id="5V0D"/>
    </source>
</evidence>
<evidence type="ECO:0007744" key="46">
    <source>
    </source>
</evidence>
<evidence type="ECO:0007744" key="47">
    <source>
    </source>
</evidence>
<evidence type="ECO:0007829" key="48">
    <source>
        <dbReference type="PDB" id="5V05"/>
    </source>
</evidence>
<evidence type="ECO:0007829" key="49">
    <source>
        <dbReference type="PDB" id="5V07"/>
    </source>
</evidence>
<evidence type="ECO:0007829" key="50">
    <source>
        <dbReference type="PDB" id="5V0D"/>
    </source>
</evidence>
<evidence type="ECO:0007829" key="51">
    <source>
        <dbReference type="PDB" id="7MXV"/>
    </source>
</evidence>
<dbReference type="EC" id="3.1.-.-"/>
<dbReference type="EMBL" id="AF084974">
    <property type="protein sequence ID" value="AAD13754.1"/>
    <property type="molecule type" value="mRNA"/>
</dbReference>
<dbReference type="EMBL" id="AF091740">
    <property type="protein sequence ID" value="AAC63043.1"/>
    <property type="molecule type" value="mRNA"/>
</dbReference>
<dbReference type="EMBL" id="AF091754">
    <property type="protein sequence ID" value="AAC69879.1"/>
    <property type="molecule type" value="Genomic_DNA"/>
</dbReference>
<dbReference type="EMBL" id="AF091742">
    <property type="protein sequence ID" value="AAC69879.1"/>
    <property type="status" value="JOINED"/>
    <property type="molecule type" value="Genomic_DNA"/>
</dbReference>
<dbReference type="EMBL" id="AF091743">
    <property type="protein sequence ID" value="AAC69879.1"/>
    <property type="status" value="JOINED"/>
    <property type="molecule type" value="Genomic_DNA"/>
</dbReference>
<dbReference type="EMBL" id="AF091744">
    <property type="protein sequence ID" value="AAC69879.1"/>
    <property type="status" value="JOINED"/>
    <property type="molecule type" value="Genomic_DNA"/>
</dbReference>
<dbReference type="EMBL" id="AF091745">
    <property type="protein sequence ID" value="AAC69879.1"/>
    <property type="status" value="JOINED"/>
    <property type="molecule type" value="Genomic_DNA"/>
</dbReference>
<dbReference type="EMBL" id="AF091746">
    <property type="protein sequence ID" value="AAC69879.1"/>
    <property type="status" value="JOINED"/>
    <property type="molecule type" value="Genomic_DNA"/>
</dbReference>
<dbReference type="EMBL" id="AF091747">
    <property type="protein sequence ID" value="AAC69879.1"/>
    <property type="status" value="JOINED"/>
    <property type="molecule type" value="Genomic_DNA"/>
</dbReference>
<dbReference type="EMBL" id="AF091748">
    <property type="protein sequence ID" value="AAC69879.1"/>
    <property type="status" value="JOINED"/>
    <property type="molecule type" value="Genomic_DNA"/>
</dbReference>
<dbReference type="EMBL" id="AF091749">
    <property type="protein sequence ID" value="AAC69879.1"/>
    <property type="status" value="JOINED"/>
    <property type="molecule type" value="Genomic_DNA"/>
</dbReference>
<dbReference type="EMBL" id="AF091750">
    <property type="protein sequence ID" value="AAC69879.1"/>
    <property type="status" value="JOINED"/>
    <property type="molecule type" value="Genomic_DNA"/>
</dbReference>
<dbReference type="EMBL" id="AF091751">
    <property type="protein sequence ID" value="AAC69879.1"/>
    <property type="status" value="JOINED"/>
    <property type="molecule type" value="Genomic_DNA"/>
</dbReference>
<dbReference type="EMBL" id="AF091752">
    <property type="protein sequence ID" value="AAC69879.1"/>
    <property type="status" value="JOINED"/>
    <property type="molecule type" value="Genomic_DNA"/>
</dbReference>
<dbReference type="EMBL" id="AF091753">
    <property type="protein sequence ID" value="AAC69879.1"/>
    <property type="status" value="JOINED"/>
    <property type="molecule type" value="Genomic_DNA"/>
</dbReference>
<dbReference type="EMBL" id="AF091754">
    <property type="protein sequence ID" value="AAC69880.1"/>
    <property type="molecule type" value="Genomic_DNA"/>
</dbReference>
<dbReference type="EMBL" id="AF091742">
    <property type="protein sequence ID" value="AAC69880.1"/>
    <property type="status" value="JOINED"/>
    <property type="molecule type" value="Genomic_DNA"/>
</dbReference>
<dbReference type="EMBL" id="AF091743">
    <property type="protein sequence ID" value="AAC69880.1"/>
    <property type="status" value="JOINED"/>
    <property type="molecule type" value="Genomic_DNA"/>
</dbReference>
<dbReference type="EMBL" id="AF091744">
    <property type="protein sequence ID" value="AAC69880.1"/>
    <property type="status" value="JOINED"/>
    <property type="molecule type" value="Genomic_DNA"/>
</dbReference>
<dbReference type="EMBL" id="AF091745">
    <property type="protein sequence ID" value="AAC69880.1"/>
    <property type="status" value="JOINED"/>
    <property type="molecule type" value="Genomic_DNA"/>
</dbReference>
<dbReference type="EMBL" id="AF091746">
    <property type="protein sequence ID" value="AAC69880.1"/>
    <property type="status" value="JOINED"/>
    <property type="molecule type" value="Genomic_DNA"/>
</dbReference>
<dbReference type="EMBL" id="AF091747">
    <property type="protein sequence ID" value="AAC69880.1"/>
    <property type="status" value="JOINED"/>
    <property type="molecule type" value="Genomic_DNA"/>
</dbReference>
<dbReference type="EMBL" id="AF091748">
    <property type="protein sequence ID" value="AAC69880.1"/>
    <property type="status" value="JOINED"/>
    <property type="molecule type" value="Genomic_DNA"/>
</dbReference>
<dbReference type="EMBL" id="AF091749">
    <property type="protein sequence ID" value="AAC69880.1"/>
    <property type="status" value="JOINED"/>
    <property type="molecule type" value="Genomic_DNA"/>
</dbReference>
<dbReference type="EMBL" id="AF091750">
    <property type="protein sequence ID" value="AAC69880.1"/>
    <property type="status" value="JOINED"/>
    <property type="molecule type" value="Genomic_DNA"/>
</dbReference>
<dbReference type="EMBL" id="AF091751">
    <property type="protein sequence ID" value="AAC69880.1"/>
    <property type="status" value="JOINED"/>
    <property type="molecule type" value="Genomic_DNA"/>
</dbReference>
<dbReference type="EMBL" id="AF091752">
    <property type="protein sequence ID" value="AAC69880.1"/>
    <property type="status" value="JOINED"/>
    <property type="molecule type" value="Genomic_DNA"/>
</dbReference>
<dbReference type="EMBL" id="AF091753">
    <property type="protein sequence ID" value="AAC69880.1"/>
    <property type="status" value="JOINED"/>
    <property type="molecule type" value="Genomic_DNA"/>
</dbReference>
<dbReference type="EMBL" id="AF042282">
    <property type="protein sequence ID" value="AAC32259.1"/>
    <property type="molecule type" value="mRNA"/>
</dbReference>
<dbReference type="EMBL" id="AC004783">
    <property type="protein sequence ID" value="AAC32424.1"/>
    <property type="molecule type" value="Genomic_DNA"/>
</dbReference>
<dbReference type="EMBL" id="AF060479">
    <property type="protein sequence ID" value="AAC33874.1"/>
    <property type="status" value="ALT_FRAME"/>
    <property type="molecule type" value="mRNA"/>
</dbReference>
<dbReference type="EMBL" id="AF549168">
    <property type="protein sequence ID" value="AAN39382.1"/>
    <property type="molecule type" value="Genomic_DNA"/>
</dbReference>
<dbReference type="EMBL" id="AL365366">
    <property type="status" value="NOT_ANNOTATED_CDS"/>
    <property type="molecule type" value="Genomic_DNA"/>
</dbReference>
<dbReference type="EMBL" id="BC007491">
    <property type="protein sequence ID" value="AAH07491.1"/>
    <property type="molecule type" value="mRNA"/>
</dbReference>
<dbReference type="EMBL" id="AL080139">
    <property type="protein sequence ID" value="CAB45733.1"/>
    <property type="molecule type" value="mRNA"/>
</dbReference>
<dbReference type="CCDS" id="CCDS1620.1">
    <molecule id="Q9UQ84-1"/>
</dbReference>
<dbReference type="CCDS" id="CCDS44336.1">
    <molecule id="Q9UQ84-4"/>
</dbReference>
<dbReference type="PIR" id="T12524">
    <property type="entry name" value="T12524"/>
</dbReference>
<dbReference type="RefSeq" id="NP_003677.4">
    <molecule id="Q9UQ84-4"/>
    <property type="nucleotide sequence ID" value="NM_003686.4"/>
</dbReference>
<dbReference type="RefSeq" id="NP_006018.4">
    <molecule id="Q9UQ84-1"/>
    <property type="nucleotide sequence ID" value="NM_006027.4"/>
</dbReference>
<dbReference type="RefSeq" id="NP_569082.2">
    <molecule id="Q9UQ84-1"/>
    <property type="nucleotide sequence ID" value="NM_130398.4"/>
</dbReference>
<dbReference type="RefSeq" id="XP_006711903.1">
    <molecule id="Q9UQ84-1"/>
    <property type="nucleotide sequence ID" value="XM_006711840.3"/>
</dbReference>
<dbReference type="RefSeq" id="XP_011542623.1">
    <molecule id="Q9UQ84-1"/>
    <property type="nucleotide sequence ID" value="XM_011544321.3"/>
</dbReference>
<dbReference type="RefSeq" id="XP_011542624.1">
    <molecule id="Q9UQ84-1"/>
    <property type="nucleotide sequence ID" value="XM_011544322.2"/>
</dbReference>
<dbReference type="RefSeq" id="XP_047290060.1">
    <molecule id="Q9UQ84-1"/>
    <property type="nucleotide sequence ID" value="XM_047434104.1"/>
</dbReference>
<dbReference type="RefSeq" id="XP_047290062.1">
    <molecule id="Q9UQ84-1"/>
    <property type="nucleotide sequence ID" value="XM_047434106.1"/>
</dbReference>
<dbReference type="PDB" id="3QE9">
    <property type="method" value="X-ray"/>
    <property type="resolution" value="2.51 A"/>
    <property type="chains" value="Y/Z=1-352"/>
</dbReference>
<dbReference type="PDB" id="3QEA">
    <property type="method" value="X-ray"/>
    <property type="resolution" value="3.10 A"/>
    <property type="chains" value="Z=1-352"/>
</dbReference>
<dbReference type="PDB" id="3QEB">
    <property type="method" value="X-ray"/>
    <property type="resolution" value="3.00 A"/>
    <property type="chains" value="Z=1-352"/>
</dbReference>
<dbReference type="PDB" id="5UZV">
    <property type="method" value="X-ray"/>
    <property type="resolution" value="2.45 A"/>
    <property type="chains" value="Z=1-352"/>
</dbReference>
<dbReference type="PDB" id="5V04">
    <property type="method" value="X-ray"/>
    <property type="resolution" value="2.65 A"/>
    <property type="chains" value="Z=1-352"/>
</dbReference>
<dbReference type="PDB" id="5V05">
    <property type="method" value="X-ray"/>
    <property type="resolution" value="2.90 A"/>
    <property type="chains" value="Z=1-352"/>
</dbReference>
<dbReference type="PDB" id="5V06">
    <property type="method" value="X-ray"/>
    <property type="resolution" value="2.75 A"/>
    <property type="chains" value="Z=1-352"/>
</dbReference>
<dbReference type="PDB" id="5V07">
    <property type="method" value="X-ray"/>
    <property type="resolution" value="2.15 A"/>
    <property type="chains" value="Z=1-352"/>
</dbReference>
<dbReference type="PDB" id="5V08">
    <property type="method" value="X-ray"/>
    <property type="resolution" value="2.81 A"/>
    <property type="chains" value="Z=1-352"/>
</dbReference>
<dbReference type="PDB" id="5V09">
    <property type="method" value="X-ray"/>
    <property type="resolution" value="2.75 A"/>
    <property type="chains" value="Z=1-352"/>
</dbReference>
<dbReference type="PDB" id="5V0A">
    <property type="method" value="X-ray"/>
    <property type="resolution" value="2.38 A"/>
    <property type="chains" value="Z=1-352"/>
</dbReference>
<dbReference type="PDB" id="5V0B">
    <property type="method" value="X-ray"/>
    <property type="resolution" value="2.63 A"/>
    <property type="chains" value="Z=1-352"/>
</dbReference>
<dbReference type="PDB" id="5V0C">
    <property type="method" value="X-ray"/>
    <property type="resolution" value="2.58 A"/>
    <property type="chains" value="Z=1-352"/>
</dbReference>
<dbReference type="PDB" id="5V0D">
    <property type="method" value="X-ray"/>
    <property type="resolution" value="2.63 A"/>
    <property type="chains" value="Z=1-352"/>
</dbReference>
<dbReference type="PDB" id="5V0E">
    <property type="method" value="X-ray"/>
    <property type="resolution" value="2.74 A"/>
    <property type="chains" value="Z=1-352"/>
</dbReference>
<dbReference type="PDB" id="7MXQ">
    <property type="method" value="X-ray"/>
    <property type="resolution" value="3.23 A"/>
    <property type="chains" value="Z=1-352"/>
</dbReference>
<dbReference type="PDB" id="7MXR">
    <property type="method" value="X-ray"/>
    <property type="resolution" value="3.10 A"/>
    <property type="chains" value="Z=1-352"/>
</dbReference>
<dbReference type="PDB" id="7MXS">
    <property type="method" value="X-ray"/>
    <property type="resolution" value="2.80 A"/>
    <property type="chains" value="Z=1-352"/>
</dbReference>
<dbReference type="PDB" id="7MXT">
    <property type="method" value="X-ray"/>
    <property type="resolution" value="3.05 A"/>
    <property type="chains" value="Z=1-352"/>
</dbReference>
<dbReference type="PDB" id="7MXU">
    <property type="method" value="X-ray"/>
    <property type="resolution" value="3.04 A"/>
    <property type="chains" value="Z=1-352"/>
</dbReference>
<dbReference type="PDB" id="7MXV">
    <property type="method" value="X-ray"/>
    <property type="resolution" value="2.21 A"/>
    <property type="chains" value="Z=1-352"/>
</dbReference>
<dbReference type="PDB" id="7MXW">
    <property type="method" value="X-ray"/>
    <property type="resolution" value="2.84 A"/>
    <property type="chains" value="Z=1-352"/>
</dbReference>
<dbReference type="PDB" id="7MXX">
    <property type="method" value="X-ray"/>
    <property type="resolution" value="2.85 A"/>
    <property type="chains" value="Z=1-352"/>
</dbReference>
<dbReference type="PDBsum" id="3QE9"/>
<dbReference type="PDBsum" id="3QEA"/>
<dbReference type="PDBsum" id="3QEB"/>
<dbReference type="PDBsum" id="5UZV"/>
<dbReference type="PDBsum" id="5V04"/>
<dbReference type="PDBsum" id="5V05"/>
<dbReference type="PDBsum" id="5V06"/>
<dbReference type="PDBsum" id="5V07"/>
<dbReference type="PDBsum" id="5V08"/>
<dbReference type="PDBsum" id="5V09"/>
<dbReference type="PDBsum" id="5V0A"/>
<dbReference type="PDBsum" id="5V0B"/>
<dbReference type="PDBsum" id="5V0C"/>
<dbReference type="PDBsum" id="5V0D"/>
<dbReference type="PDBsum" id="5V0E"/>
<dbReference type="PDBsum" id="7MXQ"/>
<dbReference type="PDBsum" id="7MXR"/>
<dbReference type="PDBsum" id="7MXS"/>
<dbReference type="PDBsum" id="7MXT"/>
<dbReference type="PDBsum" id="7MXU"/>
<dbReference type="PDBsum" id="7MXV"/>
<dbReference type="PDBsum" id="7MXW"/>
<dbReference type="PDBsum" id="7MXX"/>
<dbReference type="SMR" id="Q9UQ84"/>
<dbReference type="BioGRID" id="114602">
    <property type="interactions" value="60"/>
</dbReference>
<dbReference type="CORUM" id="Q9UQ84"/>
<dbReference type="DIP" id="DIP-36701N"/>
<dbReference type="FunCoup" id="Q9UQ84">
    <property type="interactions" value="1868"/>
</dbReference>
<dbReference type="IntAct" id="Q9UQ84">
    <property type="interactions" value="34"/>
</dbReference>
<dbReference type="MINT" id="Q9UQ84"/>
<dbReference type="STRING" id="9606.ENSP00000355506"/>
<dbReference type="BindingDB" id="Q9UQ84"/>
<dbReference type="ChEMBL" id="CHEMBL4523496"/>
<dbReference type="GlyGen" id="Q9UQ84">
    <property type="glycosylation" value="2 sites, 1 O-linked glycan (2 sites)"/>
</dbReference>
<dbReference type="iPTMnet" id="Q9UQ84"/>
<dbReference type="PhosphoSitePlus" id="Q9UQ84"/>
<dbReference type="BioMuta" id="EXO1"/>
<dbReference type="DMDM" id="85700954"/>
<dbReference type="jPOST" id="Q9UQ84"/>
<dbReference type="MassIVE" id="Q9UQ84"/>
<dbReference type="PaxDb" id="9606-ENSP00000355506"/>
<dbReference type="PeptideAtlas" id="Q9UQ84"/>
<dbReference type="ProteomicsDB" id="85518">
    <molecule id="Q9UQ84-1"/>
</dbReference>
<dbReference type="ProteomicsDB" id="85519">
    <molecule id="Q9UQ84-4"/>
</dbReference>
<dbReference type="Pumba" id="Q9UQ84"/>
<dbReference type="Antibodypedia" id="34705">
    <property type="antibodies" value="382 antibodies from 34 providers"/>
</dbReference>
<dbReference type="DNASU" id="9156"/>
<dbReference type="Ensembl" id="ENST00000348581.9">
    <molecule id="Q9UQ84-1"/>
    <property type="protein sequence ID" value="ENSP00000311873.5"/>
    <property type="gene ID" value="ENSG00000174371.17"/>
</dbReference>
<dbReference type="Ensembl" id="ENST00000366548.8">
    <molecule id="Q9UQ84-1"/>
    <property type="protein sequence ID" value="ENSP00000355506.3"/>
    <property type="gene ID" value="ENSG00000174371.17"/>
</dbReference>
<dbReference type="Ensembl" id="ENST00000518483.5">
    <molecule id="Q9UQ84-4"/>
    <property type="protein sequence ID" value="ENSP00000430251.1"/>
    <property type="gene ID" value="ENSG00000174371.17"/>
</dbReference>
<dbReference type="GeneID" id="9156"/>
<dbReference type="KEGG" id="hsa:9156"/>
<dbReference type="MANE-Select" id="ENST00000366548.8">
    <property type="protein sequence ID" value="ENSP00000355506.3"/>
    <property type="RefSeq nucleotide sequence ID" value="NM_130398.4"/>
    <property type="RefSeq protein sequence ID" value="NP_569082.2"/>
</dbReference>
<dbReference type="UCSC" id="uc001hzh.4">
    <molecule id="Q9UQ84-1"/>
    <property type="organism name" value="human"/>
</dbReference>
<dbReference type="AGR" id="HGNC:3511"/>
<dbReference type="CTD" id="9156"/>
<dbReference type="DisGeNET" id="9156"/>
<dbReference type="GeneCards" id="EXO1"/>
<dbReference type="HGNC" id="HGNC:3511">
    <property type="gene designation" value="EXO1"/>
</dbReference>
<dbReference type="HPA" id="ENSG00000174371">
    <property type="expression patterns" value="Tissue enhanced (bone marrow, lymphoid tissue)"/>
</dbReference>
<dbReference type="MalaCards" id="EXO1"/>
<dbReference type="MIM" id="606063">
    <property type="type" value="gene"/>
</dbReference>
<dbReference type="neXtProt" id="NX_Q9UQ84"/>
<dbReference type="OpenTargets" id="ENSG00000174371"/>
<dbReference type="PharmGKB" id="PA27923"/>
<dbReference type="VEuPathDB" id="HostDB:ENSG00000174371"/>
<dbReference type="eggNOG" id="KOG2518">
    <property type="taxonomic scope" value="Eukaryota"/>
</dbReference>
<dbReference type="GeneTree" id="ENSGT00510000047676"/>
<dbReference type="HOGENOM" id="CLU_009851_0_0_1"/>
<dbReference type="InParanoid" id="Q9UQ84"/>
<dbReference type="OMA" id="AFCMKLV"/>
<dbReference type="OrthoDB" id="26491at2759"/>
<dbReference type="PAN-GO" id="Q9UQ84">
    <property type="GO annotations" value="5 GO annotations based on evolutionary models"/>
</dbReference>
<dbReference type="PhylomeDB" id="Q9UQ84"/>
<dbReference type="TreeFam" id="TF314997"/>
<dbReference type="BRENDA" id="3.1.11.1">
    <property type="organism ID" value="2681"/>
</dbReference>
<dbReference type="PathwayCommons" id="Q9UQ84"/>
<dbReference type="Reactome" id="R-HSA-5358565">
    <property type="pathway name" value="Mismatch repair (MMR) directed by MSH2:MSH6 (MutSalpha)"/>
</dbReference>
<dbReference type="Reactome" id="R-HSA-5358606">
    <property type="pathway name" value="Mismatch repair (MMR) directed by MSH2:MSH3 (MutSbeta)"/>
</dbReference>
<dbReference type="Reactome" id="R-HSA-5685938">
    <property type="pathway name" value="HDR through Single Strand Annealing (SSA)"/>
</dbReference>
<dbReference type="Reactome" id="R-HSA-5685942">
    <property type="pathway name" value="HDR through Homologous Recombination (HRR)"/>
</dbReference>
<dbReference type="Reactome" id="R-HSA-5693554">
    <property type="pathway name" value="Resolution of D-loop Structures through Synthesis-Dependent Strand Annealing (SDSA)"/>
</dbReference>
<dbReference type="Reactome" id="R-HSA-5693568">
    <property type="pathway name" value="Resolution of D-loop Structures through Holliday Junction Intermediates"/>
</dbReference>
<dbReference type="Reactome" id="R-HSA-5693579">
    <property type="pathway name" value="Homologous DNA Pairing and Strand Exchange"/>
</dbReference>
<dbReference type="Reactome" id="R-HSA-5693607">
    <property type="pathway name" value="Processing of DNA double-strand break ends"/>
</dbReference>
<dbReference type="Reactome" id="R-HSA-5693616">
    <property type="pathway name" value="Presynaptic phase of homologous DNA pairing and strand exchange"/>
</dbReference>
<dbReference type="Reactome" id="R-HSA-6804756">
    <property type="pathway name" value="Regulation of TP53 Activity through Phosphorylation"/>
</dbReference>
<dbReference type="Reactome" id="R-HSA-69473">
    <property type="pathway name" value="G2/M DNA damage checkpoint"/>
</dbReference>
<dbReference type="Reactome" id="R-HSA-9701192">
    <property type="pathway name" value="Defective homologous recombination repair (HRR) due to BRCA1 loss of function"/>
</dbReference>
<dbReference type="Reactome" id="R-HSA-9704331">
    <property type="pathway name" value="Defective HDR through Homologous Recombination Repair (HRR) due to PALB2 loss of BRCA1 binding function"/>
</dbReference>
<dbReference type="Reactome" id="R-HSA-9704646">
    <property type="pathway name" value="Defective HDR through Homologous Recombination Repair (HRR) due to PALB2 loss of BRCA2/RAD51/RAD51C binding function"/>
</dbReference>
<dbReference type="Reactome" id="R-HSA-9709570">
    <property type="pathway name" value="Impaired BRCA2 binding to RAD51"/>
</dbReference>
<dbReference type="Reactome" id="R-HSA-9709603">
    <property type="pathway name" value="Impaired BRCA2 binding to PALB2"/>
</dbReference>
<dbReference type="SignaLink" id="Q9UQ84"/>
<dbReference type="SIGNOR" id="Q9UQ84"/>
<dbReference type="BioGRID-ORCS" id="9156">
    <property type="hits" value="33 hits in 1164 CRISPR screens"/>
</dbReference>
<dbReference type="ChiTaRS" id="EXO1">
    <property type="organism name" value="human"/>
</dbReference>
<dbReference type="EvolutionaryTrace" id="Q9UQ84"/>
<dbReference type="GeneWiki" id="Exonuclease_1"/>
<dbReference type="GenomeRNAi" id="9156"/>
<dbReference type="Pharos" id="Q9UQ84">
    <property type="development level" value="Tbio"/>
</dbReference>
<dbReference type="PRO" id="PR:Q9UQ84"/>
<dbReference type="Proteomes" id="UP000005640">
    <property type="component" value="Chromosome 1"/>
</dbReference>
<dbReference type="RNAct" id="Q9UQ84">
    <property type="molecule type" value="protein"/>
</dbReference>
<dbReference type="Bgee" id="ENSG00000174371">
    <property type="expression patterns" value="Expressed in ventricular zone and 131 other cell types or tissues"/>
</dbReference>
<dbReference type="ExpressionAtlas" id="Q9UQ84">
    <property type="expression patterns" value="baseline and differential"/>
</dbReference>
<dbReference type="GO" id="GO:0016604">
    <property type="term" value="C:nuclear body"/>
    <property type="evidence" value="ECO:0000314"/>
    <property type="project" value="HPA"/>
</dbReference>
<dbReference type="GO" id="GO:0005654">
    <property type="term" value="C:nucleoplasm"/>
    <property type="evidence" value="ECO:0000314"/>
    <property type="project" value="HPA"/>
</dbReference>
<dbReference type="GO" id="GO:0005634">
    <property type="term" value="C:nucleus"/>
    <property type="evidence" value="ECO:0000314"/>
    <property type="project" value="UniProtKB"/>
</dbReference>
<dbReference type="GO" id="GO:0005886">
    <property type="term" value="C:plasma membrane"/>
    <property type="evidence" value="ECO:0000314"/>
    <property type="project" value="HPA"/>
</dbReference>
<dbReference type="GO" id="GO:0035312">
    <property type="term" value="F:5'-3' DNA exonuclease activity"/>
    <property type="evidence" value="ECO:0000314"/>
    <property type="project" value="UniProtKB"/>
</dbReference>
<dbReference type="GO" id="GO:0008409">
    <property type="term" value="F:5'-3' exonuclease activity"/>
    <property type="evidence" value="ECO:0000250"/>
    <property type="project" value="UniProtKB"/>
</dbReference>
<dbReference type="GO" id="GO:0017108">
    <property type="term" value="F:5'-flap endonuclease activity"/>
    <property type="evidence" value="ECO:0000318"/>
    <property type="project" value="GO_Central"/>
</dbReference>
<dbReference type="GO" id="GO:0003682">
    <property type="term" value="F:chromatin binding"/>
    <property type="evidence" value="ECO:0007669"/>
    <property type="project" value="Ensembl"/>
</dbReference>
<dbReference type="GO" id="GO:0003677">
    <property type="term" value="F:DNA binding"/>
    <property type="evidence" value="ECO:0000314"/>
    <property type="project" value="UniProtKB"/>
</dbReference>
<dbReference type="GO" id="GO:0051908">
    <property type="term" value="F:double-stranded DNA 5'-3' DNA exonuclease activity"/>
    <property type="evidence" value="ECO:0000314"/>
    <property type="project" value="UniProtKB"/>
</dbReference>
<dbReference type="GO" id="GO:0004527">
    <property type="term" value="F:exonuclease activity"/>
    <property type="evidence" value="ECO:0000304"/>
    <property type="project" value="ProtInc"/>
</dbReference>
<dbReference type="GO" id="GO:0048256">
    <property type="term" value="F:flap endonuclease activity"/>
    <property type="evidence" value="ECO:0000314"/>
    <property type="project" value="UniProtKB"/>
</dbReference>
<dbReference type="GO" id="GO:0046872">
    <property type="term" value="F:metal ion binding"/>
    <property type="evidence" value="ECO:0007669"/>
    <property type="project" value="UniProtKB-KW"/>
</dbReference>
<dbReference type="GO" id="GO:0004523">
    <property type="term" value="F:RNA-DNA hybrid ribonuclease activity"/>
    <property type="evidence" value="ECO:0000304"/>
    <property type="project" value="ProtInc"/>
</dbReference>
<dbReference type="GO" id="GO:0045145">
    <property type="term" value="F:single-stranded DNA 5'-3' DNA exonuclease activity"/>
    <property type="evidence" value="ECO:0000314"/>
    <property type="project" value="UniProtKB"/>
</dbReference>
<dbReference type="GO" id="GO:0006310">
    <property type="term" value="P:DNA recombination"/>
    <property type="evidence" value="ECO:0000316"/>
    <property type="project" value="UniProtKB"/>
</dbReference>
<dbReference type="GO" id="GO:0006281">
    <property type="term" value="P:DNA repair"/>
    <property type="evidence" value="ECO:0000304"/>
    <property type="project" value="ProtInc"/>
</dbReference>
<dbReference type="GO" id="GO:0110025">
    <property type="term" value="P:DNA strand resection involved in replication fork processing"/>
    <property type="evidence" value="ECO:0000315"/>
    <property type="project" value="UniProt"/>
</dbReference>
<dbReference type="GO" id="GO:0002455">
    <property type="term" value="P:humoral immune response mediated by circulating immunoglobulin"/>
    <property type="evidence" value="ECO:0007669"/>
    <property type="project" value="Ensembl"/>
</dbReference>
<dbReference type="GO" id="GO:0045190">
    <property type="term" value="P:isotype switching"/>
    <property type="evidence" value="ECO:0007669"/>
    <property type="project" value="Ensembl"/>
</dbReference>
<dbReference type="GO" id="GO:0051321">
    <property type="term" value="P:meiotic cell cycle"/>
    <property type="evidence" value="ECO:0007669"/>
    <property type="project" value="UniProtKB-KW"/>
</dbReference>
<dbReference type="GO" id="GO:0006298">
    <property type="term" value="P:mismatch repair"/>
    <property type="evidence" value="ECO:0000314"/>
    <property type="project" value="UniProtKB"/>
</dbReference>
<dbReference type="GO" id="GO:0016446">
    <property type="term" value="P:somatic hypermutation of immunoglobulin genes"/>
    <property type="evidence" value="ECO:0007669"/>
    <property type="project" value="Ensembl"/>
</dbReference>
<dbReference type="GO" id="GO:0090656">
    <property type="term" value="P:t-circle formation"/>
    <property type="evidence" value="ECO:0000304"/>
    <property type="project" value="BHF-UCL"/>
</dbReference>
<dbReference type="CDD" id="cd09908">
    <property type="entry name" value="H3TH_EXO1"/>
    <property type="match status" value="1"/>
</dbReference>
<dbReference type="CDD" id="cd09857">
    <property type="entry name" value="PIN_EXO1"/>
    <property type="match status" value="1"/>
</dbReference>
<dbReference type="FunFam" id="3.40.50.1010:FF:000111">
    <property type="entry name" value="Exonuclease 1"/>
    <property type="match status" value="1"/>
</dbReference>
<dbReference type="FunFam" id="1.10.150.20:FF:000011">
    <property type="entry name" value="exonuclease 1"/>
    <property type="match status" value="1"/>
</dbReference>
<dbReference type="Gene3D" id="1.10.150.20">
    <property type="entry name" value="5' to 3' exonuclease, C-terminal subdomain"/>
    <property type="match status" value="1"/>
</dbReference>
<dbReference type="Gene3D" id="3.40.50.1010">
    <property type="entry name" value="5'-nuclease"/>
    <property type="match status" value="1"/>
</dbReference>
<dbReference type="InterPro" id="IPR036279">
    <property type="entry name" value="5-3_exonuclease_C_sf"/>
</dbReference>
<dbReference type="InterPro" id="IPR037315">
    <property type="entry name" value="EXO1_H3TH"/>
</dbReference>
<dbReference type="InterPro" id="IPR008918">
    <property type="entry name" value="HhH2"/>
</dbReference>
<dbReference type="InterPro" id="IPR029060">
    <property type="entry name" value="PIN-like_dom_sf"/>
</dbReference>
<dbReference type="InterPro" id="IPR044752">
    <property type="entry name" value="PIN-like_EXO1"/>
</dbReference>
<dbReference type="InterPro" id="IPR006086">
    <property type="entry name" value="XPG-I_dom"/>
</dbReference>
<dbReference type="InterPro" id="IPR006084">
    <property type="entry name" value="XPG/Rad2"/>
</dbReference>
<dbReference type="InterPro" id="IPR019974">
    <property type="entry name" value="XPG_CS"/>
</dbReference>
<dbReference type="InterPro" id="IPR006085">
    <property type="entry name" value="XPG_DNA_repair_N"/>
</dbReference>
<dbReference type="PANTHER" id="PTHR11081:SF8">
    <property type="entry name" value="EXONUCLEASE 1"/>
    <property type="match status" value="1"/>
</dbReference>
<dbReference type="PANTHER" id="PTHR11081">
    <property type="entry name" value="FLAP ENDONUCLEASE FAMILY MEMBER"/>
    <property type="match status" value="1"/>
</dbReference>
<dbReference type="Pfam" id="PF00867">
    <property type="entry name" value="XPG_I"/>
    <property type="match status" value="1"/>
</dbReference>
<dbReference type="Pfam" id="PF00752">
    <property type="entry name" value="XPG_N"/>
    <property type="match status" value="1"/>
</dbReference>
<dbReference type="PRINTS" id="PR00853">
    <property type="entry name" value="XPGRADSUPER"/>
</dbReference>
<dbReference type="SMART" id="SM00279">
    <property type="entry name" value="HhH2"/>
    <property type="match status" value="1"/>
</dbReference>
<dbReference type="SMART" id="SM00484">
    <property type="entry name" value="XPGI"/>
    <property type="match status" value="1"/>
</dbReference>
<dbReference type="SMART" id="SM00485">
    <property type="entry name" value="XPGN"/>
    <property type="match status" value="1"/>
</dbReference>
<dbReference type="SUPFAM" id="SSF47807">
    <property type="entry name" value="5' to 3' exonuclease, C-terminal subdomain"/>
    <property type="match status" value="1"/>
</dbReference>
<dbReference type="SUPFAM" id="SSF88723">
    <property type="entry name" value="PIN domain-like"/>
    <property type="match status" value="1"/>
</dbReference>
<dbReference type="PROSITE" id="PS00841">
    <property type="entry name" value="XPG_1"/>
    <property type="match status" value="1"/>
</dbReference>
<dbReference type="PROSITE" id="PS00842">
    <property type="entry name" value="XPG_2"/>
    <property type="match status" value="1"/>
</dbReference>
<name>EXO1_HUMAN</name>
<comment type="function">
    <text evidence="6 7 12 13 14 16 18 19 21 24 25 31">5'-&gt;3' double-stranded DNA exonuclease which may also possess a cryptic 3'-&gt;5' double-stranded DNA exonuclease activity. Functions in DNA mismatch repair (MMR) to excise mismatch-containing DNA tracts directed by strand breaks located either 5' or 3' to the mismatch. Also exhibits endonuclease activity against 5'-overhanging flap structures similar to those generated by displacement synthesis when DNA polymerase encounters the 5'-end of a downstream Okazaki fragment. Required for somatic hypermutation (SHM) and class switch recombination (CSR) of immunoglobulin genes. Essential for male and female meiosis.</text>
</comment>
<comment type="cofactor">
    <cofactor evidence="1">
        <name>Mg(2+)</name>
        <dbReference type="ChEBI" id="CHEBI:18420"/>
    </cofactor>
    <text evidence="1">Binds 2 magnesium ions per subunit. They probably participate in the reaction catalyzed by the enzyme. May bind an additional third magnesium ion after substrate binding.</text>
</comment>
<comment type="subunit">
    <text evidence="8 10 11 14 16 19 21 24 30 32">Interacts with the MLH1-PMS2 heterodimer via MLH1. Interacts with MSH3. Interacts with the MSH2-MSH6 heterodimer via MSH2, and this interaction may increase the processivity of the 5'-&gt;3' exonuclease activity. Interacts with PCNA, and this interaction may both stimulate the cryptic 3'-&gt;5' exonuclease activity and suppress the 5'-&gt;3' exonuclease activity. Interacts with WRN, and this interaction stimulates both the 5'-&gt;3' exonuclease activity and cleavage of 5'-overhanging flap structures. Interacts with RECQL/RECQ1, and this interaction stimulates cleavage of 5'-overhanging flap structures. Interacts with DNA helicase ZGRF1; the interaction is increased following DNA damage induction (PubMed:34552057).</text>
</comment>
<comment type="interaction">
    <interactant intactId="EBI-944667">
        <id>Q9UQ84</id>
    </interactant>
    <interactant intactId="EBI-745715">
        <id>Q99708</id>
        <label>RBBP8</label>
    </interactant>
    <organismsDiffer>false</organismsDiffer>
    <experiments>4</experiments>
</comment>
<comment type="interaction">
    <interactant intactId="EBI-944667">
        <id>Q9UQ84</id>
    </interactant>
    <interactant intactId="EBI-10962579">
        <id>Q86YA3</id>
        <label>ZGRF1</label>
    </interactant>
    <organismsDiffer>false</organismsDiffer>
    <experiments>3</experiments>
</comment>
<comment type="interaction">
    <interactant intactId="EBI-944694">
        <id>Q9UQ84-1</id>
    </interactant>
    <interactant intactId="EBI-355888">
        <id>P43246</id>
        <label>MSH2</label>
    </interactant>
    <organismsDiffer>false</organismsDiffer>
    <experiments>3</experiments>
</comment>
<comment type="subcellular location">
    <subcellularLocation>
        <location evidence="11 19 26">Nucleus</location>
    </subcellularLocation>
    <text>Colocalizes with PCNA to discrete nuclear foci in S-phase.</text>
</comment>
<comment type="alternative products">
    <event type="alternative splicing"/>
    <isoform>
        <id>Q9UQ84-1</id>
        <name>1</name>
        <name>B</name>
        <sequence type="displayed"/>
    </isoform>
    <isoform>
        <id>Q9UQ84-4</id>
        <name>2</name>
        <name>A</name>
        <sequence type="described" ref="VSP_017029 VSP_017030"/>
    </isoform>
</comment>
<comment type="tissue specificity">
    <text evidence="8 31 32 33">Highly expressed in bone marrow, testis and thymus. Expressed at lower levels in colon, lymph nodes, ovary, placenta, prostate, small intestine, spleen and stomach.</text>
</comment>
<comment type="developmental stage">
    <text evidence="8">Highly expressed in fetal liver and at lower levels in fetal brain, heart, kidney, spleen and thymus.</text>
</comment>
<comment type="PTM">
    <text evidence="28">Phosphorylated upon DNA damage and in response to agents stalling DNA replication, probably by ATM or ATR. Phosphorylation at Ser-454, Thr-621 and Ser-714 is induced upon DNA-damage caused by treatment with hydroxyurea (HU) but not upon IR treatment. The HU-induced EXO1 triple phosphorylation facilitates destabilization/degradation of the protein.</text>
</comment>
<comment type="polymorphism">
    <text evidence="15 17">Most naturally occurring variants in this protein are not associated with familial disposition to hereditary non-polyposis colorectal cancer (HNPCC) (PubMed:12517792). Furthermore, germline deletions involving this locus are not associated with clinically manifested colorectal tumors (PubMed:14623461).</text>
</comment>
<comment type="similarity">
    <text evidence="36">Belongs to the XPG/RAD2 endonuclease family. EXO1 subfamily.</text>
</comment>
<comment type="sequence caution" evidence="36">
    <conflict type="frameshift">
        <sequence resource="EMBL-CDS" id="AAC33874"/>
    </conflict>
</comment>
<gene>
    <name type="primary">EXO1</name>
    <name type="synonym">EXOI</name>
    <name type="synonym">HEX1</name>
</gene>
<accession>Q9UQ84</accession>
<accession>O60545</accession>
<accession>O75214</accession>
<accession>O75466</accession>
<accession>Q5T396</accession>
<accession>Q96IJ1</accession>
<accession>Q9UG38</accession>
<accession>Q9UNW0</accession>
<keyword id="KW-0002">3D-structure</keyword>
<keyword id="KW-0007">Acetylation</keyword>
<keyword id="KW-0025">Alternative splicing</keyword>
<keyword id="KW-0903">Direct protein sequencing</keyword>
<keyword id="KW-0227">DNA damage</keyword>
<keyword id="KW-0228">DNA excision</keyword>
<keyword id="KW-0234">DNA repair</keyword>
<keyword id="KW-0238">DNA-binding</keyword>
<keyword id="KW-0255">Endonuclease</keyword>
<keyword id="KW-0267">Excision nuclease</keyword>
<keyword id="KW-0269">Exonuclease</keyword>
<keyword id="KW-0378">Hydrolase</keyword>
<keyword id="KW-0391">Immunity</keyword>
<keyword id="KW-0460">Magnesium</keyword>
<keyword id="KW-0469">Meiosis</keyword>
<keyword id="KW-0479">Metal-binding</keyword>
<keyword id="KW-0540">Nuclease</keyword>
<keyword id="KW-0539">Nucleus</keyword>
<keyword id="KW-0597">Phosphoprotein</keyword>
<keyword id="KW-1267">Proteomics identification</keyword>
<keyword id="KW-1185">Reference proteome</keyword>
<reference key="1">
    <citation type="journal article" date="1998" name="Cancer Res.">
        <title>Human exonuclease I interacts with the mismatch repair protein hMSH2.</title>
        <authorList>
            <person name="Schmutte C."/>
            <person name="Marinescu R.C."/>
            <person name="Sadoff M.M."/>
            <person name="Guerrette S."/>
            <person name="Overhauser J."/>
            <person name="Fishel R."/>
        </authorList>
    </citation>
    <scope>NUCLEOTIDE SEQUENCE [MRNA] (ISOFORM 1)</scope>
    <scope>INTERACTION WITH MSH2</scope>
    <scope>TISSUE SPECIFICITY</scope>
    <scope>VARIANTS ARG-354; LYS-589; GLY-670; CYS-723 AND LEU-757</scope>
</reference>
<reference key="2">
    <citation type="journal article" date="1998" name="Cancer Res.">
        <title>Identification of a human gene encoding a homologue of Saccharomyces cerevisiae EXO1, an exonuclease implicated in mismatch repair and recombination.</title>
        <authorList>
            <person name="Tishkoff D.X."/>
            <person name="Amin N.S."/>
            <person name="Viars C.S."/>
            <person name="Arden K.C."/>
            <person name="Kolodner R.D."/>
        </authorList>
    </citation>
    <scope>NUCLEOTIDE SEQUENCE [GENOMIC DNA / MRNA]</scope>
    <scope>ALTERNATIVE SPLICING</scope>
    <scope>TISSUE SPECIFICITY</scope>
    <scope>VARIANTS ARG-354; LYS-589; GLY-670 AND CYS-723</scope>
</reference>
<reference key="3">
    <citation type="journal article" date="1998" name="Nucleic Acids Res.">
        <title>Hex1: a new human Rad2 nuclease family member with homology to yeast exonuclease 1.</title>
        <authorList>
            <person name="Wilson D.M. III"/>
            <person name="Carney J.P."/>
            <person name="Coleman M.A."/>
            <person name="Adamson A.W."/>
            <person name="Christensen M."/>
            <person name="Lamerdin J.E."/>
        </authorList>
    </citation>
    <scope>NUCLEOTIDE SEQUENCE [GENOMIC DNA / MRNA]</scope>
    <scope>ALTERNATIVE SPLICING</scope>
    <scope>FUNCTION</scope>
    <scope>TISSUE SPECIFICITY</scope>
    <scope>VARIANTS ARG-354; LYS-589; GLY-670 AND CYS-723</scope>
    <source>
        <tissue>Sperm</tissue>
    </source>
</reference>
<reference key="4">
    <citation type="journal article" date="1999" name="J. Biol. Chem.">
        <title>Human exonuclease 1 functionally complements its yeast homologues in DNA recombination, RNA primer removal, and mutation avoidance.</title>
        <authorList>
            <person name="Qiu J."/>
            <person name="Qian Y."/>
            <person name="Chen V."/>
            <person name="Guan M.-X."/>
            <person name="Shen B."/>
        </authorList>
    </citation>
    <scope>NUCLEOTIDE SEQUENCE [MRNA] (ISOFORM 2)</scope>
    <scope>PROTEIN SEQUENCE OF 1-7 (ISOFORMS 1/2)</scope>
    <scope>FUNCTION</scope>
    <scope>VARIANTS ARG-354; LYS-589; GLY-670 AND CYS-723</scope>
</reference>
<reference key="5">
    <citation type="submission" date="2002-10" db="EMBL/GenBank/DDBJ databases">
        <authorList>
            <consortium name="NIEHS SNPs program"/>
        </authorList>
    </citation>
    <scope>NUCLEOTIDE SEQUENCE [GENOMIC DNA]</scope>
    <scope>VARIANTS ILE-76; GLY-93; SER-279; SER-299; ARG-354; ASN-428; MET-439; TYR-456; MET-458; LEU-460; THR-503; LYS-589; GLN-634; GLY-670; CYS-723; LEU-757 AND GLU-759</scope>
</reference>
<reference key="6">
    <citation type="journal article" date="2006" name="Nature">
        <title>The DNA sequence and biological annotation of human chromosome 1.</title>
        <authorList>
            <person name="Gregory S.G."/>
            <person name="Barlow K.F."/>
            <person name="McLay K.E."/>
            <person name="Kaul R."/>
            <person name="Swarbreck D."/>
            <person name="Dunham A."/>
            <person name="Scott C.E."/>
            <person name="Howe K.L."/>
            <person name="Woodfine K."/>
            <person name="Spencer C.C.A."/>
            <person name="Jones M.C."/>
            <person name="Gillson C."/>
            <person name="Searle S."/>
            <person name="Zhou Y."/>
            <person name="Kokocinski F."/>
            <person name="McDonald L."/>
            <person name="Evans R."/>
            <person name="Phillips K."/>
            <person name="Atkinson A."/>
            <person name="Cooper R."/>
            <person name="Jones C."/>
            <person name="Hall R.E."/>
            <person name="Andrews T.D."/>
            <person name="Lloyd C."/>
            <person name="Ainscough R."/>
            <person name="Almeida J.P."/>
            <person name="Ambrose K.D."/>
            <person name="Anderson F."/>
            <person name="Andrew R.W."/>
            <person name="Ashwell R.I.S."/>
            <person name="Aubin K."/>
            <person name="Babbage A.K."/>
            <person name="Bagguley C.L."/>
            <person name="Bailey J."/>
            <person name="Beasley H."/>
            <person name="Bethel G."/>
            <person name="Bird C.P."/>
            <person name="Bray-Allen S."/>
            <person name="Brown J.Y."/>
            <person name="Brown A.J."/>
            <person name="Buckley D."/>
            <person name="Burton J."/>
            <person name="Bye J."/>
            <person name="Carder C."/>
            <person name="Chapman J.C."/>
            <person name="Clark S.Y."/>
            <person name="Clarke G."/>
            <person name="Clee C."/>
            <person name="Cobley V."/>
            <person name="Collier R.E."/>
            <person name="Corby N."/>
            <person name="Coville G.J."/>
            <person name="Davies J."/>
            <person name="Deadman R."/>
            <person name="Dunn M."/>
            <person name="Earthrowl M."/>
            <person name="Ellington A.G."/>
            <person name="Errington H."/>
            <person name="Frankish A."/>
            <person name="Frankland J."/>
            <person name="French L."/>
            <person name="Garner P."/>
            <person name="Garnett J."/>
            <person name="Gay L."/>
            <person name="Ghori M.R.J."/>
            <person name="Gibson R."/>
            <person name="Gilby L.M."/>
            <person name="Gillett W."/>
            <person name="Glithero R.J."/>
            <person name="Grafham D.V."/>
            <person name="Griffiths C."/>
            <person name="Griffiths-Jones S."/>
            <person name="Grocock R."/>
            <person name="Hammond S."/>
            <person name="Harrison E.S.I."/>
            <person name="Hart E."/>
            <person name="Haugen E."/>
            <person name="Heath P.D."/>
            <person name="Holmes S."/>
            <person name="Holt K."/>
            <person name="Howden P.J."/>
            <person name="Hunt A.R."/>
            <person name="Hunt S.E."/>
            <person name="Hunter G."/>
            <person name="Isherwood J."/>
            <person name="James R."/>
            <person name="Johnson C."/>
            <person name="Johnson D."/>
            <person name="Joy A."/>
            <person name="Kay M."/>
            <person name="Kershaw J.K."/>
            <person name="Kibukawa M."/>
            <person name="Kimberley A.M."/>
            <person name="King A."/>
            <person name="Knights A.J."/>
            <person name="Lad H."/>
            <person name="Laird G."/>
            <person name="Lawlor S."/>
            <person name="Leongamornlert D.A."/>
            <person name="Lloyd D.M."/>
            <person name="Loveland J."/>
            <person name="Lovell J."/>
            <person name="Lush M.J."/>
            <person name="Lyne R."/>
            <person name="Martin S."/>
            <person name="Mashreghi-Mohammadi M."/>
            <person name="Matthews L."/>
            <person name="Matthews N.S.W."/>
            <person name="McLaren S."/>
            <person name="Milne S."/>
            <person name="Mistry S."/>
            <person name="Moore M.J.F."/>
            <person name="Nickerson T."/>
            <person name="O'Dell C.N."/>
            <person name="Oliver K."/>
            <person name="Palmeiri A."/>
            <person name="Palmer S.A."/>
            <person name="Parker A."/>
            <person name="Patel D."/>
            <person name="Pearce A.V."/>
            <person name="Peck A.I."/>
            <person name="Pelan S."/>
            <person name="Phelps K."/>
            <person name="Phillimore B.J."/>
            <person name="Plumb R."/>
            <person name="Rajan J."/>
            <person name="Raymond C."/>
            <person name="Rouse G."/>
            <person name="Saenphimmachak C."/>
            <person name="Sehra H.K."/>
            <person name="Sheridan E."/>
            <person name="Shownkeen R."/>
            <person name="Sims S."/>
            <person name="Skuce C.D."/>
            <person name="Smith M."/>
            <person name="Steward C."/>
            <person name="Subramanian S."/>
            <person name="Sycamore N."/>
            <person name="Tracey A."/>
            <person name="Tromans A."/>
            <person name="Van Helmond Z."/>
            <person name="Wall M."/>
            <person name="Wallis J.M."/>
            <person name="White S."/>
            <person name="Whitehead S.L."/>
            <person name="Wilkinson J.E."/>
            <person name="Willey D.L."/>
            <person name="Williams H."/>
            <person name="Wilming L."/>
            <person name="Wray P.W."/>
            <person name="Wu Z."/>
            <person name="Coulson A."/>
            <person name="Vaudin M."/>
            <person name="Sulston J.E."/>
            <person name="Durbin R.M."/>
            <person name="Hubbard T."/>
            <person name="Wooster R."/>
            <person name="Dunham I."/>
            <person name="Carter N.P."/>
            <person name="McVean G."/>
            <person name="Ross M.T."/>
            <person name="Harrow J."/>
            <person name="Olson M.V."/>
            <person name="Beck S."/>
            <person name="Rogers J."/>
            <person name="Bentley D.R."/>
        </authorList>
    </citation>
    <scope>NUCLEOTIDE SEQUENCE [LARGE SCALE GENOMIC DNA]</scope>
</reference>
<reference key="7">
    <citation type="journal article" date="2004" name="Genome Res.">
        <title>The status, quality, and expansion of the NIH full-length cDNA project: the Mammalian Gene Collection (MGC).</title>
        <authorList>
            <consortium name="The MGC Project Team"/>
        </authorList>
    </citation>
    <scope>NUCLEOTIDE SEQUENCE [LARGE SCALE MRNA] (ISOFORM 1)</scope>
    <scope>VARIANTS GLY-670 AND CYS-723</scope>
    <source>
        <tissue>Skin</tissue>
    </source>
</reference>
<reference key="8">
    <citation type="journal article" date="2007" name="BMC Genomics">
        <title>The full-ORF clone resource of the German cDNA consortium.</title>
        <authorList>
            <person name="Bechtel S."/>
            <person name="Rosenfelder H."/>
            <person name="Duda A."/>
            <person name="Schmidt C.P."/>
            <person name="Ernst U."/>
            <person name="Wellenreuther R."/>
            <person name="Mehrle A."/>
            <person name="Schuster C."/>
            <person name="Bahr A."/>
            <person name="Bloecker H."/>
            <person name="Heubner D."/>
            <person name="Hoerlein A."/>
            <person name="Michel G."/>
            <person name="Wedler H."/>
            <person name="Koehrer K."/>
            <person name="Ottenwaelder B."/>
            <person name="Poustka A."/>
            <person name="Wiemann S."/>
            <person name="Schupp I."/>
        </authorList>
    </citation>
    <scope>NUCLEOTIDE SEQUENCE [LARGE SCALE MRNA] OF 175-846 (ISOFORM 1)</scope>
    <scope>VARIANTS LYS-589; GLY-670 AND CYS-723</scope>
    <source>
        <tissue>Testis</tissue>
    </source>
</reference>
<reference key="9">
    <citation type="journal article" date="1999" name="J. Biol. Chem.">
        <title>The RAD2 domain of human exonuclease 1 exhibits 5' to 3' exonuclease and flap structure-specific endonuclease activities.</title>
        <authorList>
            <person name="Lee B.-I."/>
            <person name="Wilson D.M. III"/>
        </authorList>
    </citation>
    <scope>FUNCTION</scope>
</reference>
<reference key="10">
    <citation type="journal article" date="2000" name="Mutat. Res.">
        <title>Identification of factors interacting with hMSH2 in the fetal liver utilizing the yeast two-hybrid system. In vivo interaction through the C-terminal domains of hEXO1 and hMSH2 and comparative expression analysis.</title>
        <authorList>
            <person name="Rasmussen L.J."/>
            <person name="Rasmussen M."/>
            <person name="Lee B.-I."/>
            <person name="Rasmussen A.K."/>
            <person name="Wilson D.M. III"/>
            <person name="Nielsen F.C."/>
            <person name="Bisgaard H.C."/>
        </authorList>
    </citation>
    <scope>INTERACTION WITH MSH2</scope>
    <scope>TISSUE SPECIFICITY</scope>
    <scope>DEVELOPMENTAL STAGE</scope>
</reference>
<reference key="11">
    <citation type="journal article" date="2001" name="J. Biol. Chem.">
        <title>The interaction of DNA mismatch repair proteins with human exonuclease I.</title>
        <authorList>
            <person name="Schmutte C."/>
            <person name="Sadoff M.M."/>
            <person name="Shim K.-S."/>
            <person name="Acharya S."/>
            <person name="Fishel R."/>
        </authorList>
    </citation>
    <scope>INTERACTION WITH MLH1; MSH2 AND MSH3</scope>
</reference>
<reference key="12">
    <citation type="journal article" date="2001" name="Oncogene">
        <title>HNPCC mutations in the human DNA mismatch repair gene hMLH1 influence assembly of hMutLalpha and hMLH1-hEXO1 complexes.</title>
        <authorList>
            <person name="Jaeger A.C."/>
            <person name="Rasmussen M."/>
            <person name="Bisgaard H.C."/>
            <person name="Singh K.K."/>
            <person name="Nielsen F.C."/>
            <person name="Rasmussen L.J."/>
        </authorList>
    </citation>
    <scope>INTERACTION WITH MLH1 AND MSH2</scope>
    <scope>SUBCELLULAR LOCATION</scope>
</reference>
<reference key="13">
    <citation type="journal article" date="2002" name="Cancer Res.">
        <title>Functional alterations of human exonuclease 1 mutants identified in atypical hereditary nonpolyposis colorectal cancer syndrome.</title>
        <authorList>
            <person name="Sun X."/>
            <person name="Zheng L."/>
            <person name="Shen B."/>
        </authorList>
    </citation>
    <scope>FUNCTION</scope>
    <scope>INTERACTION WITH MLH1 AND MSH2</scope>
    <scope>CHARACTERIZATION OF VARIANTS LYS-109; ARG-410; SER-640; GLU-759 AND LEU-770</scope>
</reference>
<reference key="14">
    <citation type="journal article" date="2002" name="J. Biol. Chem.">
        <title>Human exonuclease I is required for 5' and 3' mismatch repair.</title>
        <authorList>
            <person name="Genschel J."/>
            <person name="Bazemore L.R."/>
            <person name="Modrich P."/>
        </authorList>
    </citation>
    <scope>FUNCTION</scope>
</reference>
<reference key="15">
    <citation type="journal article" date="2002" name="Nucleic Acids Res.">
        <title>Molecular interactions of human Exo1 with DNA.</title>
        <authorList>
            <person name="Lee B.-I."/>
            <person name="Nguyen L.H."/>
            <person name="Barsky D."/>
            <person name="Fernandes M."/>
            <person name="Wilson D.M. III"/>
        </authorList>
    </citation>
    <scope>FUNCTION</scope>
    <scope>DNA-BINDING</scope>
    <scope>MUTAGENESIS OF ASP-78; ASP-173 AND ASP-225</scope>
</reference>
<reference key="16">
    <citation type="journal article" date="2003" name="Cancer Genet. Cytogenet.">
        <title>Germline deletions of EXO1 do not cause colorectal tumors and lesions which are null for EXO1 do not have microsatellite instability.</title>
        <authorList>
            <person name="Alam N.A."/>
            <person name="Gorman P."/>
            <person name="Jaeger E.E.M."/>
            <person name="Kelsell D."/>
            <person name="Leigh I.M."/>
            <person name="Ratnavel R."/>
            <person name="Murdoch M.E."/>
            <person name="Houlston R.S."/>
            <person name="Aaltonen L.A."/>
            <person name="Roylance R.R."/>
            <person name="Tomlinson I.P.M."/>
        </authorList>
    </citation>
    <scope>INVOLVEMENT IN COLORECTAL CANCER</scope>
</reference>
<reference key="17">
    <citation type="journal article" date="2003" name="J. Biol. Chem.">
        <title>The exonucleolytic and endonucleolytic cleavage activities of human exonuclease 1 are stimulated by an interaction with the carboxyl-terminal region of the Werner syndrome protein.</title>
        <authorList>
            <person name="Sharma S."/>
            <person name="Sommers J.A."/>
            <person name="Driscoll H.C."/>
            <person name="Uzdilla L.A."/>
            <person name="Wilson T.M."/>
            <person name="Brosh R.M. Jr."/>
        </authorList>
    </citation>
    <scope>FUNCTION</scope>
    <scope>INTERACTION WITH WRN</scope>
</reference>
<reference key="18">
    <citation type="journal article" date="2003" name="Mol. Cell">
        <title>Mechanism of 5'-directed excision in human mismatch repair.</title>
        <authorList>
            <person name="Genschel J."/>
            <person name="Modrich P."/>
        </authorList>
    </citation>
    <scope>FUNCTION</scope>
</reference>
<reference key="19">
    <citation type="journal article" date="2004" name="Mol. Cell">
        <title>A defined human system that supports bidirectional mismatch-provoked excision.</title>
        <authorList>
            <person name="Dzantiev L."/>
            <person name="Constantin N."/>
            <person name="Genschel J."/>
            <person name="Iyer R.R."/>
            <person name="Burgers P.M."/>
            <person name="Modrich P."/>
        </authorList>
    </citation>
    <scope>FUNCTION</scope>
    <scope>INTERACTION WITH PCNA</scope>
    <scope>MUTAGENESIS OF ASP-173</scope>
</reference>
<reference key="20">
    <citation type="journal article" date="2004" name="Oncogene">
        <title>Characterization of human exonuclease 1 in complex with mismatch repair proteins, subcellular localization and association with PCNA.</title>
        <authorList>
            <person name="Nielsen F.C."/>
            <person name="Jaeger A.C."/>
            <person name="Luetzen A."/>
            <person name="Bundgaard J.R."/>
            <person name="Rasmussen L.J."/>
        </authorList>
    </citation>
    <scope>FUNCTION</scope>
    <scope>INTERACTION WITH MLH1 AND MSH2</scope>
    <scope>SUBCELLULAR LOCATION</scope>
</reference>
<reference key="21">
    <citation type="journal article" date="2005" name="Cell">
        <title>Reconstitution of 5'-directed human mismatch repair in a purified system.</title>
        <authorList>
            <person name="Zhang Y."/>
            <person name="Yuan F."/>
            <person name="Presnell S.R."/>
            <person name="Tian K."/>
            <person name="Gao Y."/>
            <person name="Tomkinson A.E."/>
            <person name="Gu L."/>
            <person name="Li G.-M."/>
        </authorList>
    </citation>
    <scope>FUNCTION</scope>
</reference>
<reference key="22">
    <citation type="journal article" date="2005" name="J. Biol. Chem.">
        <title>RECQ1 helicase interacts with human mismatch repair factors that regulate genetic recombination.</title>
        <authorList>
            <person name="Doherty K.M."/>
            <person name="Sharma S."/>
            <person name="Uzdilla L.A."/>
            <person name="Wilson T.M."/>
            <person name="Cui S."/>
            <person name="Vindigni A."/>
            <person name="Brosh R.M. Jr."/>
        </authorList>
    </citation>
    <scope>FUNCTION</scope>
    <scope>INTERACTION WITH RECQL</scope>
</reference>
<reference key="23">
    <citation type="journal article" date="2007" name="Nucleic Acids Res.">
        <title>Nuclear localization of human DNA mismatch repair protein exonuclease 1 (hEXO1).</title>
        <authorList>
            <person name="Knudsen N.O."/>
            <person name="Nielsen F.C."/>
            <person name="Vinther L."/>
            <person name="Bertelsen R."/>
            <person name="Holten-Andersen S."/>
            <person name="Liberti S.E."/>
            <person name="Hofstra R."/>
            <person name="Kooi K."/>
            <person name="Rasmussen L.J."/>
        </authorList>
    </citation>
    <scope>SUBCELLULAR LOCATION</scope>
    <scope>MUTAGENESIS OF LYS-418 AND ARG-419</scope>
</reference>
<reference key="24">
    <citation type="journal article" date="2007" name="Science">
        <title>ATM and ATR substrate analysis reveals extensive protein networks responsive to DNA damage.</title>
        <authorList>
            <person name="Matsuoka S."/>
            <person name="Ballif B.A."/>
            <person name="Smogorzewska A."/>
            <person name="McDonald E.R. III"/>
            <person name="Hurov K.E."/>
            <person name="Luo J."/>
            <person name="Bakalarski C.E."/>
            <person name="Zhao Z."/>
            <person name="Solimini N."/>
            <person name="Lerenthal Y."/>
            <person name="Shiloh Y."/>
            <person name="Gygi S.P."/>
            <person name="Elledge S.J."/>
        </authorList>
    </citation>
    <scope>IDENTIFICATION BY MASS SPECTROMETRY [LARGE SCALE ANALYSIS]</scope>
    <source>
        <tissue>Embryonic kidney</tissue>
    </source>
</reference>
<reference key="25">
    <citation type="journal article" date="2008" name="Nucleic Acids Res.">
        <title>ATR-dependent pathways control hEXO1 stability in response to stalled forks.</title>
        <authorList>
            <person name="El-Shemerly M."/>
            <person name="Hess D."/>
            <person name="Pyakurel A.K."/>
            <person name="Moselhy S."/>
            <person name="Ferrari S."/>
        </authorList>
    </citation>
    <scope>PHOSPHORYLATION AT SER-376; SER-422; SER-454; THR-581; SER-598; THR-621; SER-623; SER-639; SER-660; SER-674; SER-714 AND SER-746</scope>
    <scope>ACETYLATION AT LYS-482</scope>
    <scope>IDENTIFICATION BY MASS SPECTROMETRY</scope>
    <scope>MUTAGENESIS OF SER-454; THR-621 AND SER-714</scope>
</reference>
<reference key="26">
    <citation type="journal article" date="2008" name="Proc. Natl. Acad. Sci. U.S.A.">
        <title>A quantitative atlas of mitotic phosphorylation.</title>
        <authorList>
            <person name="Dephoure N."/>
            <person name="Zhou C."/>
            <person name="Villen J."/>
            <person name="Beausoleil S.A."/>
            <person name="Bakalarski C.E."/>
            <person name="Elledge S.J."/>
            <person name="Gygi S.P."/>
        </authorList>
    </citation>
    <scope>PHOSPHORYLATION [LARGE SCALE ANALYSIS] AT SER-422</scope>
    <scope>IDENTIFICATION BY MASS SPECTROMETRY [LARGE SCALE ANALYSIS]</scope>
    <source>
        <tissue>Cervix carcinoma</tissue>
    </source>
</reference>
<reference key="27">
    <citation type="journal article" date="2009" name="Anal. Chem.">
        <title>Lys-N and trypsin cover complementary parts of the phosphoproteome in a refined SCX-based approach.</title>
        <authorList>
            <person name="Gauci S."/>
            <person name="Helbig A.O."/>
            <person name="Slijper M."/>
            <person name="Krijgsveld J."/>
            <person name="Heck A.J."/>
            <person name="Mohammed S."/>
        </authorList>
    </citation>
    <scope>IDENTIFICATION BY MASS SPECTROMETRY [LARGE SCALE ANALYSIS]</scope>
</reference>
<reference key="28">
    <citation type="journal article" date="2013" name="J. Proteome Res.">
        <title>Toward a comprehensive characterization of a human cancer cell phosphoproteome.</title>
        <authorList>
            <person name="Zhou H."/>
            <person name="Di Palma S."/>
            <person name="Preisinger C."/>
            <person name="Peng M."/>
            <person name="Polat A.N."/>
            <person name="Heck A.J."/>
            <person name="Mohammed S."/>
        </authorList>
    </citation>
    <scope>PHOSPHORYLATION [LARGE SCALE ANALYSIS] AT SER-598; SER-610 AND SER-623</scope>
    <scope>IDENTIFICATION BY MASS SPECTROMETRY [LARGE SCALE ANALYSIS]</scope>
    <source>
        <tissue>Cervix carcinoma</tissue>
        <tissue>Erythroleukemia</tissue>
    </source>
</reference>
<reference key="29">
    <citation type="journal article" date="2021" name="Cell. Death. Discov.">
        <title>ZGRF1 promotes end resection of DNA homologous recombination via forming complex with BRCA1/EXO1.</title>
        <authorList>
            <person name="Yan S."/>
            <person name="Song M."/>
            <person name="Ping J."/>
            <person name="Lai S.T."/>
            <person name="Cao X.Y."/>
            <person name="Bai C.J."/>
            <person name="Xie D.F."/>
            <person name="Guan H."/>
            <person name="Gao S.S."/>
            <person name="Zhou P.K."/>
        </authorList>
    </citation>
    <scope>INTERACTION WITH ZGRF1</scope>
</reference>
<reference key="30">
    <citation type="journal article" date="2022" name="Cell. Death. Discov.">
        <authorList>
            <person name="Yan S."/>
            <person name="Song M."/>
            <person name="Ping J."/>
            <person name="Lai S.T."/>
            <person name="Cao X.Y."/>
            <person name="Bai C.J."/>
            <person name="Xie D.F."/>
            <person name="Guan H."/>
            <person name="Gao S.S."/>
            <person name="Zhou P.K."/>
        </authorList>
    </citation>
    <scope>ERRATUM OF PUBMED:34552057</scope>
</reference>
<reference key="31">
    <citation type="journal article" date="2001" name="Gastroenterology">
        <title>Germline mutations of EXO1 gene in patients with hereditary nonpolyposis colorectal cancer (HNPCC) and atypical HNPCC forms.</title>
        <authorList>
            <person name="Wu Y."/>
            <person name="Berends M.J.W."/>
            <person name="Post J.G."/>
            <person name="Mensink R.G.J."/>
            <person name="Verlind E."/>
            <person name="van der Sluis T."/>
            <person name="Kempinga C."/>
            <person name="Sijmons R.H."/>
            <person name="van der Zee A.G.J."/>
            <person name="Hollema H."/>
            <person name="Kleibeuker J.H."/>
            <person name="Buys C.H.C.M."/>
            <person name="Hofstra R.M.W."/>
        </authorList>
    </citation>
    <scope>VARIANTS ALA-27; LYS-109; ARG-410; GLY-610; ALA-640; SER-640; GLU-759 AND LEU-770</scope>
</reference>
<reference key="32">
    <citation type="journal article" date="2003" name="Cancer Res.">
        <title>EXO1 variants occur commonly in normal population: evidence against a role in hereditary nonpolyposis colorectal cancer.</title>
        <authorList>
            <person name="Jagmohan-Changur S."/>
            <person name="Poikonen T."/>
            <person name="Vilkki S."/>
            <person name="Launonen V."/>
            <person name="Wikman F."/>
            <person name="Orntoft T.F."/>
            <person name="Moeller P."/>
            <person name="Vasen H."/>
            <person name="Tops C."/>
            <person name="Kolodner R.D."/>
            <person name="Mecklin J.-P."/>
            <person name="Jaervinen H."/>
            <person name="Bevan S."/>
            <person name="Houlston R.S."/>
            <person name="Aaltonen L.A."/>
            <person name="Fodde R."/>
            <person name="Wijnen J."/>
            <person name="Karhu A."/>
        </authorList>
    </citation>
    <scope>VARIANTS SER-137; ARG-410; CYS-438; GLY-610; ALA-640; SER-640; GLU-759 AND VAL-827</scope>
</reference>
<reference key="33">
    <citation type="journal article" date="2004" name="Clin. Genet.">
        <title>Hereditary non-polyposis colorectal cancer and the role of hPMS2 and hEXO1 mutations.</title>
        <authorList>
            <person name="Thompson E."/>
            <person name="Meldrum C.J."/>
            <person name="Crooks R."/>
            <person name="McPhillips M."/>
            <person name="Thomas L."/>
            <person name="Spigelman A.D."/>
            <person name="Scott R.J."/>
        </authorList>
    </citation>
    <scope>VARIANTS MET-439; GLY-670; PRO-726 AND LEU-757</scope>
</reference>
<reference key="34">
    <citation type="journal article" date="2005" name="Carcinogenesis">
        <title>Single nucleotide polymorphisms in the EXO1 gene and risk of colorectal cancer in a Japanese population.</title>
        <authorList>
            <person name="Yamamoto H."/>
            <person name="Hanafusa H."/>
            <person name="Ouchida M."/>
            <person name="Yano M."/>
            <person name="Suzuki H."/>
            <person name="Murakami M."/>
            <person name="Aoe M."/>
            <person name="Shimizu N."/>
            <person name="Nakachi K."/>
            <person name="Shimizu K."/>
        </authorList>
    </citation>
    <scope>VARIANTS MET-439 AND LEU-757</scope>
</reference>
<reference key="35">
    <citation type="journal article" date="2015" name="Fam. Cancer">
        <title>A novel POLE mutation associated with cancers of colon, pancreas, ovaries and small intestine.</title>
        <authorList>
            <person name="Hansen M.F."/>
            <person name="Johansen J."/>
            <person name="Bjoernevoll I."/>
            <person name="Sylvander A.E."/>
            <person name="Steinsbekk K.S."/>
            <person name="Saetrom P."/>
            <person name="Sandvik A.K."/>
            <person name="Drabloes F."/>
            <person name="Sjursen W."/>
        </authorList>
    </citation>
    <scope>VARIANT VAL-153</scope>
</reference>
<organism>
    <name type="scientific">Homo sapiens</name>
    <name type="common">Human</name>
    <dbReference type="NCBI Taxonomy" id="9606"/>
    <lineage>
        <taxon>Eukaryota</taxon>
        <taxon>Metazoa</taxon>
        <taxon>Chordata</taxon>
        <taxon>Craniata</taxon>
        <taxon>Vertebrata</taxon>
        <taxon>Euteleostomi</taxon>
        <taxon>Mammalia</taxon>
        <taxon>Eutheria</taxon>
        <taxon>Euarchontoglires</taxon>
        <taxon>Primates</taxon>
        <taxon>Haplorrhini</taxon>
        <taxon>Catarrhini</taxon>
        <taxon>Hominidae</taxon>
        <taxon>Homo</taxon>
    </lineage>
</organism>
<proteinExistence type="evidence at protein level"/>
<sequence length="846" mass="94103">MGIQGLLQFIKEASEPIHVRKYKGQVVAVDTYCWLHKGAIACAEKLAKGEPTDRYVGFCMKFVNMLLSHGIKPILVFDGCTLPSKKEVERSRRERRQANLLKGKQLLREGKVSEARECFTRSINITHAMAHKVIKAARSQGVDCLVAPYEADAQLAYLNKAGIVQAIITEDSDLLAFGCKKVILKMDQFGNGLEIDQARLGMCRQLGDVFTEEKFRYMCILSGCDYLSSLRGIGLAKACKVLRLANNPDIVKVIKKIGHYLKMNITVPEDYINGFIRANNTFLYQLVFDPIKRKLIPLNAYEDDVDPETLSYAGQYVDDSIALQIALGNKDINTFEQIDDYNPDTAMPAHSRSHSWDDKTCQKSANVSSIWHRNYSPRPESGTVSDAPQLKENPSTVGVERVISTKGLNLPRKSSIVKRPRSAELSEDDLLSQYSLSFTKKTKKNSSEGNKSLSFSEVFVPDLVNGPTNKKSVSTPPRTRNKFATFLQRKNEESGAVVVPGTRSRFFCSSDSTDCVSNKVSIQPLDETAVTDKENNLHESEYGDQEGKRLVDTDVARNSSDDIPNNHIPGDHIPDKATVFTDEESYSFESSKFTRTISPPTLGTLRSCFSWSGGLGDFSRTPSPSPSTALQQFRRKSDSPTSLPENNMSDVSQLKSEESSDDESHPLREEACSSQSQESGEFSLQSSNASKLSQCSSKDSDSEESDCNIKLLDSQSDQTSKLRLSHFSKKDTPLRNKVPGLYKSSSADSLSTTKIKPLGPARASGLSKKPASIQKRKHHNAENKPGLQIKLNELWKNFGFKKDSEKLPPCKKPLSPVRDNIQLTPEAEEDIFNKPECGRVQRAIFQ</sequence>
<protein>
    <recommendedName>
        <fullName>Exonuclease 1</fullName>
        <shortName>hExo1</shortName>
        <ecNumber>3.1.-.-</ecNumber>
    </recommendedName>
    <alternativeName>
        <fullName>Exonuclease I</fullName>
        <shortName>hExoI</shortName>
    </alternativeName>
</protein>
<feature type="chain" id="PRO_0000154039" description="Exonuclease 1">
    <location>
        <begin position="1"/>
        <end position="846"/>
    </location>
</feature>
<feature type="region of interest" description="N-domain">
    <location>
        <begin position="1"/>
        <end position="99"/>
    </location>
</feature>
<feature type="region of interest" description="Interaction with MSH3" evidence="10">
    <location>
        <begin position="129"/>
        <end position="387"/>
    </location>
</feature>
<feature type="region of interest" description="I-domain">
    <location>
        <begin position="138"/>
        <end position="229"/>
    </location>
</feature>
<feature type="region of interest" description="Disordered" evidence="5">
    <location>
        <begin position="372"/>
        <end position="396"/>
    </location>
</feature>
<feature type="region of interest" description="Interaction with MLH1">
    <location>
        <begin position="388"/>
        <end position="490"/>
    </location>
</feature>
<feature type="region of interest" description="Interaction with MSH2">
    <location>
        <begin position="600"/>
        <end position="846"/>
    </location>
</feature>
<feature type="region of interest" description="Disordered" evidence="5">
    <location>
        <begin position="618"/>
        <end position="781"/>
    </location>
</feature>
<feature type="region of interest" description="Interaction with MLH1">
    <location>
        <begin position="787"/>
        <end position="846"/>
    </location>
</feature>
<feature type="short sequence motif" description="Nuclear localization signal">
    <location>
        <begin position="418"/>
        <end position="421"/>
    </location>
</feature>
<feature type="compositionally biased region" description="Polar residues" evidence="5">
    <location>
        <begin position="382"/>
        <end position="396"/>
    </location>
</feature>
<feature type="compositionally biased region" description="Polar residues" evidence="5">
    <location>
        <begin position="620"/>
        <end position="631"/>
    </location>
</feature>
<feature type="compositionally biased region" description="Polar residues" evidence="5">
    <location>
        <begin position="639"/>
        <end position="654"/>
    </location>
</feature>
<feature type="compositionally biased region" description="Basic and acidic residues" evidence="5">
    <location>
        <begin position="655"/>
        <end position="671"/>
    </location>
</feature>
<feature type="compositionally biased region" description="Polar residues" evidence="5">
    <location>
        <begin position="672"/>
        <end position="689"/>
    </location>
</feature>
<feature type="compositionally biased region" description="Polar residues" evidence="5">
    <location>
        <begin position="713"/>
        <end position="722"/>
    </location>
</feature>
<feature type="compositionally biased region" description="Polar residues" evidence="5">
    <location>
        <begin position="743"/>
        <end position="754"/>
    </location>
</feature>
<feature type="binding site" evidence="2">
    <location>
        <position position="30"/>
    </location>
    <ligand>
        <name>Mg(2+)</name>
        <dbReference type="ChEBI" id="CHEBI:18420"/>
        <label>1</label>
    </ligand>
</feature>
<feature type="binding site" evidence="3">
    <location>
        <position position="78"/>
    </location>
    <ligand>
        <name>Mg(2+)</name>
        <dbReference type="ChEBI" id="CHEBI:18420"/>
        <label>1</label>
    </ligand>
</feature>
<feature type="binding site" evidence="3">
    <location>
        <position position="150"/>
    </location>
    <ligand>
        <name>Mg(2+)</name>
        <dbReference type="ChEBI" id="CHEBI:18420"/>
        <label>1</label>
    </ligand>
</feature>
<feature type="binding site" evidence="37 38 39 40 41 42 43 44 45">
    <location>
        <position position="152"/>
    </location>
    <ligand>
        <name>Mg(2+)</name>
        <dbReference type="ChEBI" id="CHEBI:18420"/>
        <label>1</label>
    </ligand>
</feature>
<feature type="binding site" evidence="37 38 39 40 41 42 43 44 45">
    <location>
        <position position="171"/>
    </location>
    <ligand>
        <name>Mg(2+)</name>
        <dbReference type="ChEBI" id="CHEBI:18420"/>
        <label>2</label>
    </ligand>
</feature>
<feature type="binding site" evidence="37 38 39 42 43 44 45">
    <location>
        <position position="173"/>
    </location>
    <ligand>
        <name>Mg(2+)</name>
        <dbReference type="ChEBI" id="CHEBI:18420"/>
        <label>2</label>
    </ligand>
</feature>
<feature type="binding site" evidence="2">
    <location>
        <position position="225"/>
    </location>
    <ligand>
        <name>Mg(2+)</name>
        <dbReference type="ChEBI" id="CHEBI:18420"/>
        <label>2</label>
    </ligand>
</feature>
<feature type="binding site" evidence="4">
    <location>
        <position position="270"/>
    </location>
    <ligand>
        <name>Mg(2+)</name>
        <dbReference type="ChEBI" id="CHEBI:18420"/>
        <label>2</label>
    </ligand>
</feature>
<feature type="modified residue" description="Phosphoserine" evidence="28">
    <location>
        <position position="376"/>
    </location>
</feature>
<feature type="modified residue" description="Phosphoserine" evidence="28 46">
    <location>
        <position position="422"/>
    </location>
</feature>
<feature type="modified residue" description="Phosphoserine" evidence="28">
    <location>
        <position position="454"/>
    </location>
</feature>
<feature type="modified residue" description="N6-acetyllysine" evidence="28">
    <location>
        <position position="482"/>
    </location>
</feature>
<feature type="modified residue" description="Phosphothreonine" evidence="28">
    <location>
        <position position="581"/>
    </location>
</feature>
<feature type="modified residue" description="Phosphoserine" evidence="28 47">
    <location>
        <position position="598"/>
    </location>
</feature>
<feature type="modified residue" description="Phosphoserine" evidence="47">
    <location>
        <position position="610"/>
    </location>
</feature>
<feature type="modified residue" description="Phosphothreonine" evidence="28">
    <location>
        <position position="621"/>
    </location>
</feature>
<feature type="modified residue" description="Phosphoserine" evidence="28 47">
    <location>
        <position position="623"/>
    </location>
</feature>
<feature type="modified residue" description="Phosphoserine" evidence="28">
    <location>
        <position position="639"/>
    </location>
</feature>
<feature type="modified residue" description="Phosphoserine" evidence="28">
    <location>
        <position position="660"/>
    </location>
</feature>
<feature type="modified residue" description="Phosphoserine" evidence="28">
    <location>
        <position position="674"/>
    </location>
</feature>
<feature type="modified residue" description="Phosphoserine; by ATR" evidence="28">
    <location>
        <position position="714"/>
    </location>
</feature>
<feature type="modified residue" description="Phosphoserine" evidence="28">
    <location>
        <position position="746"/>
    </location>
</feature>
<feature type="splice variant" id="VSP_017029" description="In isoform 2." evidence="35">
    <original>D</original>
    <variation>F</variation>
    <location>
        <position position="803"/>
    </location>
</feature>
<feature type="splice variant" id="VSP_017030" description="In isoform 2." evidence="35">
    <location>
        <begin position="804"/>
        <end position="846"/>
    </location>
</feature>
<feature type="sequence variant" id="VAR_024966" description="In dbSNP:rs1472620416." evidence="9">
    <original>V</original>
    <variation>A</variation>
    <location>
        <position position="27"/>
    </location>
</feature>
<feature type="sequence variant" id="VAR_024967" description="In dbSNP:rs4149864." evidence="34">
    <original>V</original>
    <variation>I</variation>
    <location>
        <position position="76"/>
    </location>
</feature>
<feature type="sequence variant" id="VAR_024968" description="In dbSNP:rs4149865." evidence="34">
    <original>R</original>
    <variation>G</variation>
    <location>
        <position position="93"/>
    </location>
</feature>
<feature type="sequence variant" id="VAR_024969" description="Abrogates exonuclease activity; dbSNP:rs143546023." evidence="9 14">
    <original>E</original>
    <variation>K</variation>
    <location>
        <position position="109"/>
    </location>
</feature>
<feature type="sequence variant" id="VAR_024970" description="In dbSNP:rs147663824." evidence="15">
    <original>A</original>
    <variation>S</variation>
    <location>
        <position position="137"/>
    </location>
</feature>
<feature type="sequence variant" id="VAR_077352" evidence="29">
    <original>A</original>
    <variation>V</variation>
    <location>
        <position position="153"/>
    </location>
</feature>
<feature type="sequence variant" id="VAR_024971" description="In dbSNP:rs4149909." evidence="34">
    <original>N</original>
    <variation>S</variation>
    <location>
        <position position="279"/>
    </location>
</feature>
<feature type="sequence variant" id="VAR_024972" description="In dbSNP:rs4149910." evidence="34">
    <original>N</original>
    <variation>S</variation>
    <location>
        <position position="299"/>
    </location>
</feature>
<feature type="sequence variant" id="VAR_024973" description="In dbSNP:rs735943." evidence="6 31 32 33 34">
    <original>H</original>
    <variation>R</variation>
    <location>
        <position position="354"/>
    </location>
</feature>
<feature type="sequence variant" id="VAR_024974" description="Abrogates exonuclease activity; dbSNP:rs571928768." evidence="9 14 15">
    <original>L</original>
    <variation>R</variation>
    <location>
        <position position="410"/>
    </location>
</feature>
<feature type="sequence variant" id="VAR_024975" description="In dbSNP:rs4149962." evidence="34">
    <original>D</original>
    <variation>N</variation>
    <location>
        <position position="428"/>
    </location>
</feature>
<feature type="sequence variant" id="VAR_024976" evidence="15">
    <original>F</original>
    <variation>C</variation>
    <location>
        <position position="438"/>
    </location>
</feature>
<feature type="sequence variant" id="VAR_024977" description="May be associated with an increased risk of colorectal cancer; dbSNP:rs4149963." evidence="20 23 34">
    <original>T</original>
    <variation>M</variation>
    <location>
        <position position="439"/>
    </location>
</feature>
<feature type="sequence variant" id="VAR_024978" description="In dbSNP:rs4149964." evidence="34">
    <original>S</original>
    <variation>Y</variation>
    <location>
        <position position="456"/>
    </location>
</feature>
<feature type="sequence variant" id="VAR_024979" description="In dbSNP:rs4149965." evidence="34">
    <original>V</original>
    <variation>M</variation>
    <location>
        <position position="458"/>
    </location>
</feature>
<feature type="sequence variant" id="VAR_024980" description="In dbSNP:rs4149966." evidence="34">
    <original>V</original>
    <variation>L</variation>
    <location>
        <position position="460"/>
    </location>
</feature>
<feature type="sequence variant" id="VAR_024981" description="In dbSNP:rs4149967." evidence="34">
    <original>R</original>
    <variation>T</variation>
    <location>
        <position position="503"/>
    </location>
</feature>
<feature type="sequence variant" id="VAR_024982" description="In dbSNP:rs1047840." evidence="6 27 31 32 33 34">
    <original>E</original>
    <variation>K</variation>
    <location>
        <position position="589"/>
    </location>
</feature>
<feature type="sequence variant" id="VAR_024983" description="In dbSNP:rs12122770." evidence="9 15">
    <original>S</original>
    <variation>G</variation>
    <location>
        <position position="610"/>
    </location>
</feature>
<feature type="sequence variant" id="VAR_024984" description="In dbSNP:rs4149978." evidence="34">
    <original>R</original>
    <variation>Q</variation>
    <location>
        <position position="634"/>
    </location>
</feature>
<feature type="sequence variant" id="VAR_024985" description="In dbSNP:rs61736331." evidence="9 15">
    <original>P</original>
    <variation>A</variation>
    <location>
        <position position="640"/>
    </location>
</feature>
<feature type="sequence variant" id="VAR_024986" description="Reduces interaction with MSH2; abrogates interaction with MSH2; when associated with L-770; dbSNP:rs61736331." evidence="9 14 15">
    <original>P</original>
    <variation>S</variation>
    <location>
        <position position="640"/>
    </location>
</feature>
<feature type="sequence variant" id="VAR_024987" description="In dbSNP:rs1776148." evidence="6 20 22 27 31 32 33 34">
    <original>E</original>
    <variation>G</variation>
    <location>
        <position position="670"/>
    </location>
</feature>
<feature type="sequence variant" id="VAR_024988" description="In dbSNP:rs1635498." evidence="6 22 27 31 32 33 34">
    <original>R</original>
    <variation>C</variation>
    <location>
        <position position="723"/>
    </location>
</feature>
<feature type="sequence variant" id="VAR_024989" evidence="20">
    <original>H</original>
    <variation>P</variation>
    <location>
        <position position="726"/>
    </location>
</feature>
<feature type="sequence variant" id="VAR_024990" description="May be associated with a reduced risk of colorectal cancer; dbSNP:rs9350." evidence="20 23 32 34">
    <original>P</original>
    <variation>L</variation>
    <location>
        <position position="757"/>
    </location>
</feature>
<feature type="sequence variant" id="VAR_024991" description="Reduces interaction with MSH2; abrogates interaction with MSH2; when associated with L-770; dbSNP:rs4150001." evidence="9 14 15 34">
    <original>G</original>
    <variation>E</variation>
    <location>
        <position position="759"/>
    </location>
</feature>
<feature type="sequence variant" id="VAR_024992" description="Reduces interaction with MSH2; abrogates interaction with MSH2; when associated with S-640 or E-759; dbSNP:rs200622305." evidence="9 14">
    <original>P</original>
    <variation>L</variation>
    <location>
        <position position="770"/>
    </location>
</feature>
<feature type="sequence variant" id="VAR_024993" description="In dbSNP:rs145975455." evidence="15">
    <original>A</original>
    <variation>V</variation>
    <location>
        <position position="827"/>
    </location>
</feature>
<feature type="mutagenesis site" description="Abrogates double-stranded DNA exonuclease activity and endonuclease activity against 5'-overhanging flap structures. Also reduces DNA-binding to 5'-overhanging flap structures." evidence="13">
    <original>D</original>
    <variation>A</variation>
    <location>
        <position position="78"/>
    </location>
</feature>
<feature type="mutagenesis site" description="Abrogates double-stranded DNA exonuclease activity and endonuclease activity against 5'-overhanging flap structures. No effect on DNA-binding to 5'-overhanging flap structures." evidence="13 21">
    <original>D</original>
    <variation>A</variation>
    <location>
        <position position="173"/>
    </location>
</feature>
<feature type="mutagenesis site" description="Abrogates double-stranded DNA exonuclease activity and endonuclease activity against 5'-overhanging flap structures. Also enhances DNA-binding to 5'-overhanging flap structures." evidence="13">
    <original>D</original>
    <variation>A</variation>
    <location>
        <position position="225"/>
    </location>
</feature>
<feature type="mutagenesis site" description="Complete loss of nuclear localization." evidence="26">
    <original>K</original>
    <variation>A</variation>
    <variation>T</variation>
    <location>
        <position position="418"/>
    </location>
</feature>
<feature type="mutagenesis site" description="Complete loss of nuclear localization." evidence="26">
    <original>R</original>
    <variation>A</variation>
    <location>
        <position position="419"/>
    </location>
</feature>
<feature type="mutagenesis site" description="No rescue of HU-induced degradation. No rescue of HU-induced degradation; when associated with A-714. Loss of HU-sensitivity and resistance to HU-induced degradation; when associated with A-621 and A-714." evidence="28">
    <original>S</original>
    <variation>A</variation>
    <location>
        <position position="454"/>
    </location>
</feature>
<feature type="mutagenesis site" description="No rescue of HU-induced degradation. No rescue of HU-induced degradation; when associated with A-714. Loss of HU-sensitivity and resistance to HU-induced degradation; when associated with A-454 and A-714." evidence="28">
    <original>T</original>
    <variation>A</variation>
    <location>
        <position position="621"/>
    </location>
</feature>
<feature type="mutagenesis site" description="No rescue of HU-induced degradation and loss of HU-induced increase of phosphorylation. No rescue of HU-induced degradation; when associated with A-621. No rescue of HU-induced degradation; when associated with A-454. Loss of HU-sensitivity and resistance to HU-induced degradation; when associated with A-454 and A-621." evidence="28">
    <original>S</original>
    <variation>A</variation>
    <location>
        <position position="714"/>
    </location>
</feature>
<feature type="helix" evidence="49">
    <location>
        <begin position="6"/>
        <end position="9"/>
    </location>
</feature>
<feature type="helix" evidence="49">
    <location>
        <begin position="11"/>
        <end position="13"/>
    </location>
</feature>
<feature type="strand" evidence="49">
    <location>
        <begin position="14"/>
        <end position="18"/>
    </location>
</feature>
<feature type="helix" evidence="49">
    <location>
        <begin position="19"/>
        <end position="22"/>
    </location>
</feature>
<feature type="strand" evidence="49">
    <location>
        <begin position="25"/>
        <end position="30"/>
    </location>
</feature>
<feature type="helix" evidence="49">
    <location>
        <begin position="31"/>
        <end position="40"/>
    </location>
</feature>
<feature type="helix" evidence="49">
    <location>
        <begin position="43"/>
        <end position="48"/>
    </location>
</feature>
<feature type="helix" evidence="49">
    <location>
        <begin position="54"/>
        <end position="68"/>
    </location>
</feature>
<feature type="strand" evidence="49">
    <location>
        <begin position="72"/>
        <end position="77"/>
    </location>
</feature>
<feature type="helix" evidence="49">
    <location>
        <begin position="83"/>
        <end position="85"/>
    </location>
</feature>
<feature type="helix" evidence="49">
    <location>
        <begin position="86"/>
        <end position="107"/>
    </location>
</feature>
<feature type="turn" evidence="49">
    <location>
        <begin position="108"/>
        <end position="110"/>
    </location>
</feature>
<feature type="helix" evidence="49">
    <location>
        <begin position="112"/>
        <end position="120"/>
    </location>
</feature>
<feature type="helix" evidence="49">
    <location>
        <begin position="127"/>
        <end position="139"/>
    </location>
</feature>
<feature type="strand" evidence="49">
    <location>
        <begin position="143"/>
        <end position="146"/>
    </location>
</feature>
<feature type="helix" evidence="49">
    <location>
        <begin position="151"/>
        <end position="160"/>
    </location>
</feature>
<feature type="strand" evidence="49">
    <location>
        <begin position="165"/>
        <end position="168"/>
    </location>
</feature>
<feature type="helix" evidence="49">
    <location>
        <begin position="172"/>
        <end position="177"/>
    </location>
</feature>
<feature type="strand" evidence="49">
    <location>
        <begin position="180"/>
        <end position="185"/>
    </location>
</feature>
<feature type="strand" evidence="49">
    <location>
        <begin position="190"/>
        <end position="196"/>
    </location>
</feature>
<feature type="helix" evidence="49">
    <location>
        <begin position="197"/>
        <end position="202"/>
    </location>
</feature>
<feature type="helix" evidence="49">
    <location>
        <begin position="204"/>
        <end position="206"/>
    </location>
</feature>
<feature type="turn" evidence="49">
    <location>
        <begin position="207"/>
        <end position="210"/>
    </location>
</feature>
<feature type="helix" evidence="49">
    <location>
        <begin position="212"/>
        <end position="221"/>
    </location>
</feature>
<feature type="strand" evidence="51">
    <location>
        <begin position="225"/>
        <end position="227"/>
    </location>
</feature>
<feature type="helix" evidence="49">
    <location>
        <begin position="235"/>
        <end position="244"/>
    </location>
</feature>
<feature type="helix" evidence="49">
    <location>
        <begin position="250"/>
        <end position="255"/>
    </location>
</feature>
<feature type="helix" evidence="49">
    <location>
        <begin position="257"/>
        <end position="261"/>
    </location>
</feature>
<feature type="helix" evidence="49">
    <location>
        <begin position="269"/>
        <end position="284"/>
    </location>
</feature>
<feature type="strand" evidence="49">
    <location>
        <begin position="286"/>
        <end position="289"/>
    </location>
</feature>
<feature type="turn" evidence="49">
    <location>
        <begin position="290"/>
        <end position="293"/>
    </location>
</feature>
<feature type="strand" evidence="49">
    <location>
        <begin position="294"/>
        <end position="299"/>
    </location>
</feature>
<feature type="strand" evidence="48">
    <location>
        <begin position="303"/>
        <end position="305"/>
    </location>
</feature>
<feature type="helix" evidence="49">
    <location>
        <begin position="307"/>
        <end position="309"/>
    </location>
</feature>
<feature type="helix" evidence="49">
    <location>
        <begin position="311"/>
        <end position="313"/>
    </location>
</feature>
<feature type="helix" evidence="49">
    <location>
        <begin position="319"/>
        <end position="326"/>
    </location>
</feature>
<feature type="strand" evidence="49">
    <location>
        <begin position="332"/>
        <end position="334"/>
    </location>
</feature>
<feature type="strand" evidence="49">
    <location>
        <begin position="336"/>
        <end position="338"/>
    </location>
</feature>
<feature type="turn" evidence="50">
    <location>
        <begin position="343"/>
        <end position="345"/>
    </location>
</feature>